<evidence type="ECO:0000255" key="1">
    <source>
        <dbReference type="HAMAP-Rule" id="MF_00110"/>
    </source>
</evidence>
<protein>
    <recommendedName>
        <fullName evidence="1">3-dehydroquinate synthase</fullName>
        <shortName evidence="1">DHQS</shortName>
        <ecNumber evidence="1">4.2.3.4</ecNumber>
    </recommendedName>
</protein>
<feature type="chain" id="PRO_1000094538" description="3-dehydroquinate synthase">
    <location>
        <begin position="1"/>
        <end position="356"/>
    </location>
</feature>
<feature type="binding site" evidence="1">
    <location>
        <begin position="71"/>
        <end position="76"/>
    </location>
    <ligand>
        <name>NAD(+)</name>
        <dbReference type="ChEBI" id="CHEBI:57540"/>
    </ligand>
</feature>
<feature type="binding site" evidence="1">
    <location>
        <begin position="105"/>
        <end position="109"/>
    </location>
    <ligand>
        <name>NAD(+)</name>
        <dbReference type="ChEBI" id="CHEBI:57540"/>
    </ligand>
</feature>
<feature type="binding site" evidence="1">
    <location>
        <begin position="129"/>
        <end position="130"/>
    </location>
    <ligand>
        <name>NAD(+)</name>
        <dbReference type="ChEBI" id="CHEBI:57540"/>
    </ligand>
</feature>
<feature type="binding site" evidence="1">
    <location>
        <position position="142"/>
    </location>
    <ligand>
        <name>NAD(+)</name>
        <dbReference type="ChEBI" id="CHEBI:57540"/>
    </ligand>
</feature>
<feature type="binding site" evidence="1">
    <location>
        <position position="151"/>
    </location>
    <ligand>
        <name>NAD(+)</name>
        <dbReference type="ChEBI" id="CHEBI:57540"/>
    </ligand>
</feature>
<feature type="binding site" evidence="1">
    <location>
        <position position="184"/>
    </location>
    <ligand>
        <name>Zn(2+)</name>
        <dbReference type="ChEBI" id="CHEBI:29105"/>
    </ligand>
</feature>
<feature type="binding site" evidence="1">
    <location>
        <position position="247"/>
    </location>
    <ligand>
        <name>Zn(2+)</name>
        <dbReference type="ChEBI" id="CHEBI:29105"/>
    </ligand>
</feature>
<feature type="binding site" evidence="1">
    <location>
        <position position="264"/>
    </location>
    <ligand>
        <name>Zn(2+)</name>
        <dbReference type="ChEBI" id="CHEBI:29105"/>
    </ligand>
</feature>
<dbReference type="EC" id="4.2.3.4" evidence="1"/>
<dbReference type="EMBL" id="AM406671">
    <property type="protein sequence ID" value="CAL98507.1"/>
    <property type="molecule type" value="Genomic_DNA"/>
</dbReference>
<dbReference type="RefSeq" id="WP_011835683.1">
    <property type="nucleotide sequence ID" value="NC_009004.1"/>
</dbReference>
<dbReference type="SMR" id="A2RMH5"/>
<dbReference type="STRING" id="416870.llmg_1938"/>
<dbReference type="KEGG" id="llm:llmg_1938"/>
<dbReference type="eggNOG" id="COG0337">
    <property type="taxonomic scope" value="Bacteria"/>
</dbReference>
<dbReference type="HOGENOM" id="CLU_001201_0_1_9"/>
<dbReference type="OrthoDB" id="9806583at2"/>
<dbReference type="PhylomeDB" id="A2RMH5"/>
<dbReference type="UniPathway" id="UPA00053">
    <property type="reaction ID" value="UER00085"/>
</dbReference>
<dbReference type="Proteomes" id="UP000000364">
    <property type="component" value="Chromosome"/>
</dbReference>
<dbReference type="GO" id="GO:0005737">
    <property type="term" value="C:cytoplasm"/>
    <property type="evidence" value="ECO:0007669"/>
    <property type="project" value="UniProtKB-SubCell"/>
</dbReference>
<dbReference type="GO" id="GO:0003856">
    <property type="term" value="F:3-dehydroquinate synthase activity"/>
    <property type="evidence" value="ECO:0007669"/>
    <property type="project" value="UniProtKB-UniRule"/>
</dbReference>
<dbReference type="GO" id="GO:0046872">
    <property type="term" value="F:metal ion binding"/>
    <property type="evidence" value="ECO:0007669"/>
    <property type="project" value="UniProtKB-KW"/>
</dbReference>
<dbReference type="GO" id="GO:0000166">
    <property type="term" value="F:nucleotide binding"/>
    <property type="evidence" value="ECO:0007669"/>
    <property type="project" value="UniProtKB-KW"/>
</dbReference>
<dbReference type="GO" id="GO:0008652">
    <property type="term" value="P:amino acid biosynthetic process"/>
    <property type="evidence" value="ECO:0007669"/>
    <property type="project" value="UniProtKB-KW"/>
</dbReference>
<dbReference type="GO" id="GO:0009073">
    <property type="term" value="P:aromatic amino acid family biosynthetic process"/>
    <property type="evidence" value="ECO:0007669"/>
    <property type="project" value="UniProtKB-KW"/>
</dbReference>
<dbReference type="GO" id="GO:0009423">
    <property type="term" value="P:chorismate biosynthetic process"/>
    <property type="evidence" value="ECO:0007669"/>
    <property type="project" value="UniProtKB-UniRule"/>
</dbReference>
<dbReference type="CDD" id="cd08195">
    <property type="entry name" value="DHQS"/>
    <property type="match status" value="1"/>
</dbReference>
<dbReference type="FunFam" id="3.40.50.1970:FF:000007">
    <property type="entry name" value="Pentafunctional AROM polypeptide"/>
    <property type="match status" value="1"/>
</dbReference>
<dbReference type="Gene3D" id="3.40.50.1970">
    <property type="match status" value="1"/>
</dbReference>
<dbReference type="Gene3D" id="1.20.1090.10">
    <property type="entry name" value="Dehydroquinate synthase-like - alpha domain"/>
    <property type="match status" value="1"/>
</dbReference>
<dbReference type="HAMAP" id="MF_00110">
    <property type="entry name" value="DHQ_synthase"/>
    <property type="match status" value="1"/>
</dbReference>
<dbReference type="InterPro" id="IPR050071">
    <property type="entry name" value="Dehydroquinate_synthase"/>
</dbReference>
<dbReference type="InterPro" id="IPR016037">
    <property type="entry name" value="DHQ_synth_AroB"/>
</dbReference>
<dbReference type="InterPro" id="IPR030963">
    <property type="entry name" value="DHQ_synth_fam"/>
</dbReference>
<dbReference type="InterPro" id="IPR030960">
    <property type="entry name" value="DHQS/DOIS_N"/>
</dbReference>
<dbReference type="InterPro" id="IPR056179">
    <property type="entry name" value="DHQS_C"/>
</dbReference>
<dbReference type="NCBIfam" id="TIGR01357">
    <property type="entry name" value="aroB"/>
    <property type="match status" value="1"/>
</dbReference>
<dbReference type="PANTHER" id="PTHR43622">
    <property type="entry name" value="3-DEHYDROQUINATE SYNTHASE"/>
    <property type="match status" value="1"/>
</dbReference>
<dbReference type="PANTHER" id="PTHR43622:SF7">
    <property type="entry name" value="3-DEHYDROQUINATE SYNTHASE, CHLOROPLASTIC"/>
    <property type="match status" value="1"/>
</dbReference>
<dbReference type="Pfam" id="PF01761">
    <property type="entry name" value="DHQ_synthase"/>
    <property type="match status" value="1"/>
</dbReference>
<dbReference type="Pfam" id="PF24621">
    <property type="entry name" value="DHQS_C"/>
    <property type="match status" value="1"/>
</dbReference>
<dbReference type="PIRSF" id="PIRSF001455">
    <property type="entry name" value="DHQ_synth"/>
    <property type="match status" value="1"/>
</dbReference>
<dbReference type="SUPFAM" id="SSF56796">
    <property type="entry name" value="Dehydroquinate synthase-like"/>
    <property type="match status" value="1"/>
</dbReference>
<keyword id="KW-0028">Amino-acid biosynthesis</keyword>
<keyword id="KW-0057">Aromatic amino acid biosynthesis</keyword>
<keyword id="KW-0170">Cobalt</keyword>
<keyword id="KW-0963">Cytoplasm</keyword>
<keyword id="KW-0456">Lyase</keyword>
<keyword id="KW-0479">Metal-binding</keyword>
<keyword id="KW-0520">NAD</keyword>
<keyword id="KW-0547">Nucleotide-binding</keyword>
<keyword id="KW-0862">Zinc</keyword>
<accession>A2RMH5</accession>
<gene>
    <name evidence="1" type="primary">aroB</name>
    <name type="ordered locus">llmg_1938</name>
</gene>
<sequence>MKLNVNLPDHPYDVIIENGALANIGNWVSSLWKKQKIVLISDNHVNGLYGQKVVDQLEKSGFEVETFEFPEGEASKNLLTAEKAWNFCAEFGLTRSDGIIALGGGVTGDLAGFVASTYMRGIHFLQIPTSLTAQVDSSIGGKTGINSKMAKNMIGTFTQPDGVLIDPEVLKTLGQREFCEGLGEVIKCALIADKDLWNLLTDLSAKDLLENFAKIEEIIYRSCEVKRKVVVDDELDNGVRLYLNFGHTIGHAVENTAGYGKVMHGEAVAIGMVQISKIAEKKGLMPLGITDEIRKMVKKYGLPDDYQPWDEALLFKALTHDKKARGTIIKTVIVPEIGTAKINEVTFEEMKEYLKK</sequence>
<name>AROB_LACLM</name>
<reference key="1">
    <citation type="journal article" date="2007" name="J. Bacteriol.">
        <title>The complete genome sequence of the lactic acid bacterial paradigm Lactococcus lactis subsp. cremoris MG1363.</title>
        <authorList>
            <person name="Wegmann U."/>
            <person name="O'Connell-Motherway M."/>
            <person name="Zomer A."/>
            <person name="Buist G."/>
            <person name="Shearman C."/>
            <person name="Canchaya C."/>
            <person name="Ventura M."/>
            <person name="Goesmann A."/>
            <person name="Gasson M.J."/>
            <person name="Kuipers O.P."/>
            <person name="van Sinderen D."/>
            <person name="Kok J."/>
        </authorList>
    </citation>
    <scope>NUCLEOTIDE SEQUENCE [LARGE SCALE GENOMIC DNA]</scope>
    <source>
        <strain>MG1363</strain>
    </source>
</reference>
<organism>
    <name type="scientific">Lactococcus lactis subsp. cremoris (strain MG1363)</name>
    <dbReference type="NCBI Taxonomy" id="416870"/>
    <lineage>
        <taxon>Bacteria</taxon>
        <taxon>Bacillati</taxon>
        <taxon>Bacillota</taxon>
        <taxon>Bacilli</taxon>
        <taxon>Lactobacillales</taxon>
        <taxon>Streptococcaceae</taxon>
        <taxon>Lactococcus</taxon>
        <taxon>Lactococcus cremoris subsp. cremoris</taxon>
    </lineage>
</organism>
<proteinExistence type="inferred from homology"/>
<comment type="function">
    <text evidence="1">Catalyzes the conversion of 3-deoxy-D-arabino-heptulosonate 7-phosphate (DAHP) to dehydroquinate (DHQ).</text>
</comment>
<comment type="catalytic activity">
    <reaction evidence="1">
        <text>7-phospho-2-dehydro-3-deoxy-D-arabino-heptonate = 3-dehydroquinate + phosphate</text>
        <dbReference type="Rhea" id="RHEA:21968"/>
        <dbReference type="ChEBI" id="CHEBI:32364"/>
        <dbReference type="ChEBI" id="CHEBI:43474"/>
        <dbReference type="ChEBI" id="CHEBI:58394"/>
        <dbReference type="EC" id="4.2.3.4"/>
    </reaction>
</comment>
<comment type="cofactor">
    <cofactor evidence="1">
        <name>Co(2+)</name>
        <dbReference type="ChEBI" id="CHEBI:48828"/>
    </cofactor>
    <cofactor evidence="1">
        <name>Zn(2+)</name>
        <dbReference type="ChEBI" id="CHEBI:29105"/>
    </cofactor>
    <text evidence="1">Binds 1 divalent metal cation per subunit. Can use either Co(2+) or Zn(2+).</text>
</comment>
<comment type="cofactor">
    <cofactor evidence="1">
        <name>NAD(+)</name>
        <dbReference type="ChEBI" id="CHEBI:57540"/>
    </cofactor>
</comment>
<comment type="pathway">
    <text evidence="1">Metabolic intermediate biosynthesis; chorismate biosynthesis; chorismate from D-erythrose 4-phosphate and phosphoenolpyruvate: step 2/7.</text>
</comment>
<comment type="subcellular location">
    <subcellularLocation>
        <location evidence="1">Cytoplasm</location>
    </subcellularLocation>
</comment>
<comment type="similarity">
    <text evidence="1">Belongs to the sugar phosphate cyclases superfamily. Dehydroquinate synthase family.</text>
</comment>